<comment type="function">
    <text evidence="1">One of the primary rRNA binding proteins. Required for association of the 30S and 50S subunits to form the 70S ribosome, for tRNA binding and peptide bond formation. It has been suggested to have peptidyltransferase activity; this is somewhat controversial. Makes several contacts with the 16S rRNA in the 70S ribosome.</text>
</comment>
<comment type="subunit">
    <text evidence="1">Part of the 50S ribosomal subunit. Forms a bridge to the 30S subunit in the 70S ribosome.</text>
</comment>
<comment type="similarity">
    <text evidence="1">Belongs to the universal ribosomal protein uL2 family.</text>
</comment>
<keyword id="KW-0687">Ribonucleoprotein</keyword>
<keyword id="KW-0689">Ribosomal protein</keyword>
<keyword id="KW-0694">RNA-binding</keyword>
<keyword id="KW-0699">rRNA-binding</keyword>
<name>RL2_VARPS</name>
<protein>
    <recommendedName>
        <fullName evidence="1">Large ribosomal subunit protein uL2</fullName>
    </recommendedName>
    <alternativeName>
        <fullName evidence="3">50S ribosomal protein L2</fullName>
    </alternativeName>
</protein>
<feature type="chain" id="PRO_1000214469" description="Large ribosomal subunit protein uL2">
    <location>
        <begin position="1"/>
        <end position="274"/>
    </location>
</feature>
<feature type="region of interest" description="Disordered" evidence="2">
    <location>
        <begin position="223"/>
        <end position="256"/>
    </location>
</feature>
<feature type="compositionally biased region" description="Basic and acidic residues" evidence="2">
    <location>
        <begin position="229"/>
        <end position="246"/>
    </location>
</feature>
<reference key="1">
    <citation type="journal article" date="2011" name="J. Bacteriol.">
        <title>Complete genome sequence of the metabolically versatile plant growth-promoting endophyte, Variovorax paradoxus S110.</title>
        <authorList>
            <person name="Han J.I."/>
            <person name="Choi H.K."/>
            <person name="Lee S.W."/>
            <person name="Orwin P.M."/>
            <person name="Kim J."/>
            <person name="Laroe S.L."/>
            <person name="Kim T.G."/>
            <person name="O'Neil J."/>
            <person name="Leadbetter J.R."/>
            <person name="Lee S.Y."/>
            <person name="Hur C.G."/>
            <person name="Spain J.C."/>
            <person name="Ovchinnikova G."/>
            <person name="Goodwin L."/>
            <person name="Han C."/>
        </authorList>
    </citation>
    <scope>NUCLEOTIDE SEQUENCE [LARGE SCALE GENOMIC DNA]</scope>
    <source>
        <strain>S110</strain>
    </source>
</reference>
<dbReference type="EMBL" id="CP001635">
    <property type="protein sequence ID" value="ACS21514.1"/>
    <property type="molecule type" value="Genomic_DNA"/>
</dbReference>
<dbReference type="SMR" id="C5CP50"/>
<dbReference type="STRING" id="543728.Vapar_4910"/>
<dbReference type="KEGG" id="vap:Vapar_4910"/>
<dbReference type="eggNOG" id="COG0090">
    <property type="taxonomic scope" value="Bacteria"/>
</dbReference>
<dbReference type="HOGENOM" id="CLU_036235_2_1_4"/>
<dbReference type="OrthoDB" id="9778722at2"/>
<dbReference type="GO" id="GO:0015934">
    <property type="term" value="C:large ribosomal subunit"/>
    <property type="evidence" value="ECO:0007669"/>
    <property type="project" value="InterPro"/>
</dbReference>
<dbReference type="GO" id="GO:0019843">
    <property type="term" value="F:rRNA binding"/>
    <property type="evidence" value="ECO:0007669"/>
    <property type="project" value="UniProtKB-UniRule"/>
</dbReference>
<dbReference type="GO" id="GO:0003735">
    <property type="term" value="F:structural constituent of ribosome"/>
    <property type="evidence" value="ECO:0007669"/>
    <property type="project" value="InterPro"/>
</dbReference>
<dbReference type="GO" id="GO:0016740">
    <property type="term" value="F:transferase activity"/>
    <property type="evidence" value="ECO:0007669"/>
    <property type="project" value="InterPro"/>
</dbReference>
<dbReference type="GO" id="GO:0002181">
    <property type="term" value="P:cytoplasmic translation"/>
    <property type="evidence" value="ECO:0007669"/>
    <property type="project" value="TreeGrafter"/>
</dbReference>
<dbReference type="FunFam" id="2.30.30.30:FF:000001">
    <property type="entry name" value="50S ribosomal protein L2"/>
    <property type="match status" value="1"/>
</dbReference>
<dbReference type="FunFam" id="2.40.50.140:FF:000003">
    <property type="entry name" value="50S ribosomal protein L2"/>
    <property type="match status" value="1"/>
</dbReference>
<dbReference type="FunFam" id="4.10.950.10:FF:000001">
    <property type="entry name" value="50S ribosomal protein L2"/>
    <property type="match status" value="1"/>
</dbReference>
<dbReference type="Gene3D" id="2.30.30.30">
    <property type="match status" value="1"/>
</dbReference>
<dbReference type="Gene3D" id="2.40.50.140">
    <property type="entry name" value="Nucleic acid-binding proteins"/>
    <property type="match status" value="1"/>
</dbReference>
<dbReference type="Gene3D" id="4.10.950.10">
    <property type="entry name" value="Ribosomal protein L2, domain 3"/>
    <property type="match status" value="1"/>
</dbReference>
<dbReference type="HAMAP" id="MF_01320_B">
    <property type="entry name" value="Ribosomal_uL2_B"/>
    <property type="match status" value="1"/>
</dbReference>
<dbReference type="InterPro" id="IPR012340">
    <property type="entry name" value="NA-bd_OB-fold"/>
</dbReference>
<dbReference type="InterPro" id="IPR014722">
    <property type="entry name" value="Rib_uL2_dom2"/>
</dbReference>
<dbReference type="InterPro" id="IPR002171">
    <property type="entry name" value="Ribosomal_uL2"/>
</dbReference>
<dbReference type="InterPro" id="IPR005880">
    <property type="entry name" value="Ribosomal_uL2_bac/org-type"/>
</dbReference>
<dbReference type="InterPro" id="IPR022669">
    <property type="entry name" value="Ribosomal_uL2_C"/>
</dbReference>
<dbReference type="InterPro" id="IPR022671">
    <property type="entry name" value="Ribosomal_uL2_CS"/>
</dbReference>
<dbReference type="InterPro" id="IPR014726">
    <property type="entry name" value="Ribosomal_uL2_dom3"/>
</dbReference>
<dbReference type="InterPro" id="IPR022666">
    <property type="entry name" value="Ribosomal_uL2_RNA-bd_dom"/>
</dbReference>
<dbReference type="InterPro" id="IPR008991">
    <property type="entry name" value="Translation_prot_SH3-like_sf"/>
</dbReference>
<dbReference type="NCBIfam" id="TIGR01171">
    <property type="entry name" value="rplB_bact"/>
    <property type="match status" value="1"/>
</dbReference>
<dbReference type="PANTHER" id="PTHR13691:SF5">
    <property type="entry name" value="LARGE RIBOSOMAL SUBUNIT PROTEIN UL2M"/>
    <property type="match status" value="1"/>
</dbReference>
<dbReference type="PANTHER" id="PTHR13691">
    <property type="entry name" value="RIBOSOMAL PROTEIN L2"/>
    <property type="match status" value="1"/>
</dbReference>
<dbReference type="Pfam" id="PF00181">
    <property type="entry name" value="Ribosomal_L2"/>
    <property type="match status" value="1"/>
</dbReference>
<dbReference type="Pfam" id="PF03947">
    <property type="entry name" value="Ribosomal_L2_C"/>
    <property type="match status" value="1"/>
</dbReference>
<dbReference type="PIRSF" id="PIRSF002158">
    <property type="entry name" value="Ribosomal_L2"/>
    <property type="match status" value="1"/>
</dbReference>
<dbReference type="SMART" id="SM01383">
    <property type="entry name" value="Ribosomal_L2"/>
    <property type="match status" value="1"/>
</dbReference>
<dbReference type="SMART" id="SM01382">
    <property type="entry name" value="Ribosomal_L2_C"/>
    <property type="match status" value="1"/>
</dbReference>
<dbReference type="SUPFAM" id="SSF50249">
    <property type="entry name" value="Nucleic acid-binding proteins"/>
    <property type="match status" value="1"/>
</dbReference>
<dbReference type="SUPFAM" id="SSF50104">
    <property type="entry name" value="Translation proteins SH3-like domain"/>
    <property type="match status" value="1"/>
</dbReference>
<dbReference type="PROSITE" id="PS00467">
    <property type="entry name" value="RIBOSOMAL_L2"/>
    <property type="match status" value="1"/>
</dbReference>
<proteinExistence type="inferred from homology"/>
<organism>
    <name type="scientific">Variovorax paradoxus (strain S110)</name>
    <dbReference type="NCBI Taxonomy" id="543728"/>
    <lineage>
        <taxon>Bacteria</taxon>
        <taxon>Pseudomonadati</taxon>
        <taxon>Pseudomonadota</taxon>
        <taxon>Betaproteobacteria</taxon>
        <taxon>Burkholderiales</taxon>
        <taxon>Comamonadaceae</taxon>
        <taxon>Variovorax</taxon>
    </lineage>
</organism>
<gene>
    <name evidence="1" type="primary">rplB</name>
    <name type="ordered locus">Vapar_4910</name>
</gene>
<sequence length="274" mass="30043">MAVIKMKPTSPGQRGAVKISRDHLFKGAPHAPLLEPQFQKAGRNNNGHITIRHRGGGAKHHYRVVDFVRNKDGIPAKVERIEYDPNRTAHIALVCYADGERRYIIAPRGLEAGATLLSGSEAPIRAGNTLPIRNIPVGSTIHCIELQPGKGAQIARSAGTSATLLAREGVYAQVRMRSGEVRRIHIECRATIGEVANEEHSLRQLGKAGVKRHMGIRPTVRGVVMNPVDHPHGGGEGKTGEGRHPVDPWGNLTKGYRTRNNKRTQVFIVSRRKK</sequence>
<evidence type="ECO:0000255" key="1">
    <source>
        <dbReference type="HAMAP-Rule" id="MF_01320"/>
    </source>
</evidence>
<evidence type="ECO:0000256" key="2">
    <source>
        <dbReference type="SAM" id="MobiDB-lite"/>
    </source>
</evidence>
<evidence type="ECO:0000305" key="3"/>
<accession>C5CP50</accession>